<keyword id="KW-0143">Chaperone</keyword>
<keyword id="KW-0963">Cytoplasm</keyword>
<keyword id="KW-0235">DNA replication</keyword>
<keyword id="KW-0479">Metal-binding</keyword>
<keyword id="KW-0677">Repeat</keyword>
<keyword id="KW-0346">Stress response</keyword>
<keyword id="KW-0862">Zinc</keyword>
<keyword id="KW-0863">Zinc-finger</keyword>
<proteinExistence type="inferred from homology"/>
<protein>
    <recommendedName>
        <fullName evidence="1">Chaperone protein DnaJ</fullName>
    </recommendedName>
</protein>
<gene>
    <name evidence="1" type="primary">dnaJ</name>
    <name type="ordered locus">LMOf2365_1491</name>
</gene>
<name>DNAJ_LISMF</name>
<dbReference type="EMBL" id="AE017262">
    <property type="protein sequence ID" value="AAT04266.1"/>
    <property type="molecule type" value="Genomic_DNA"/>
</dbReference>
<dbReference type="RefSeq" id="WP_003726022.1">
    <property type="nucleotide sequence ID" value="NC_002973.6"/>
</dbReference>
<dbReference type="SMR" id="Q71ZJ8"/>
<dbReference type="KEGG" id="lmf:LMOf2365_1491"/>
<dbReference type="HOGENOM" id="CLU_017633_0_7_9"/>
<dbReference type="GO" id="GO:0005737">
    <property type="term" value="C:cytoplasm"/>
    <property type="evidence" value="ECO:0007669"/>
    <property type="project" value="UniProtKB-SubCell"/>
</dbReference>
<dbReference type="GO" id="GO:0005524">
    <property type="term" value="F:ATP binding"/>
    <property type="evidence" value="ECO:0007669"/>
    <property type="project" value="InterPro"/>
</dbReference>
<dbReference type="GO" id="GO:0031072">
    <property type="term" value="F:heat shock protein binding"/>
    <property type="evidence" value="ECO:0007669"/>
    <property type="project" value="InterPro"/>
</dbReference>
<dbReference type="GO" id="GO:0051082">
    <property type="term" value="F:unfolded protein binding"/>
    <property type="evidence" value="ECO:0007669"/>
    <property type="project" value="UniProtKB-UniRule"/>
</dbReference>
<dbReference type="GO" id="GO:0008270">
    <property type="term" value="F:zinc ion binding"/>
    <property type="evidence" value="ECO:0007669"/>
    <property type="project" value="UniProtKB-UniRule"/>
</dbReference>
<dbReference type="GO" id="GO:0051085">
    <property type="term" value="P:chaperone cofactor-dependent protein refolding"/>
    <property type="evidence" value="ECO:0007669"/>
    <property type="project" value="TreeGrafter"/>
</dbReference>
<dbReference type="GO" id="GO:0006260">
    <property type="term" value="P:DNA replication"/>
    <property type="evidence" value="ECO:0007669"/>
    <property type="project" value="UniProtKB-KW"/>
</dbReference>
<dbReference type="GO" id="GO:0042026">
    <property type="term" value="P:protein refolding"/>
    <property type="evidence" value="ECO:0007669"/>
    <property type="project" value="TreeGrafter"/>
</dbReference>
<dbReference type="GO" id="GO:0009408">
    <property type="term" value="P:response to heat"/>
    <property type="evidence" value="ECO:0007669"/>
    <property type="project" value="InterPro"/>
</dbReference>
<dbReference type="CDD" id="cd06257">
    <property type="entry name" value="DnaJ"/>
    <property type="match status" value="1"/>
</dbReference>
<dbReference type="CDD" id="cd10747">
    <property type="entry name" value="DnaJ_C"/>
    <property type="match status" value="1"/>
</dbReference>
<dbReference type="CDD" id="cd10719">
    <property type="entry name" value="DnaJ_zf"/>
    <property type="match status" value="1"/>
</dbReference>
<dbReference type="FunFam" id="1.10.287.110:FF:000031">
    <property type="entry name" value="Molecular chaperone DnaJ"/>
    <property type="match status" value="1"/>
</dbReference>
<dbReference type="FunFam" id="2.10.230.10:FF:000002">
    <property type="entry name" value="Molecular chaperone DnaJ"/>
    <property type="match status" value="1"/>
</dbReference>
<dbReference type="FunFam" id="2.60.260.20:FF:000004">
    <property type="entry name" value="Molecular chaperone DnaJ"/>
    <property type="match status" value="1"/>
</dbReference>
<dbReference type="FunFam" id="2.60.260.20:FF:000009">
    <property type="entry name" value="Putative Mitochondrial DnaJ chaperone"/>
    <property type="match status" value="1"/>
</dbReference>
<dbReference type="Gene3D" id="6.20.20.10">
    <property type="match status" value="2"/>
</dbReference>
<dbReference type="Gene3D" id="1.10.287.110">
    <property type="entry name" value="DnaJ domain"/>
    <property type="match status" value="1"/>
</dbReference>
<dbReference type="Gene3D" id="2.60.260.20">
    <property type="entry name" value="Urease metallochaperone UreE, N-terminal domain"/>
    <property type="match status" value="2"/>
</dbReference>
<dbReference type="HAMAP" id="MF_01152">
    <property type="entry name" value="DnaJ"/>
    <property type="match status" value="1"/>
</dbReference>
<dbReference type="InterPro" id="IPR012724">
    <property type="entry name" value="DnaJ"/>
</dbReference>
<dbReference type="InterPro" id="IPR002939">
    <property type="entry name" value="DnaJ_C"/>
</dbReference>
<dbReference type="InterPro" id="IPR001623">
    <property type="entry name" value="DnaJ_domain"/>
</dbReference>
<dbReference type="InterPro" id="IPR018253">
    <property type="entry name" value="DnaJ_domain_CS"/>
</dbReference>
<dbReference type="InterPro" id="IPR008971">
    <property type="entry name" value="HSP40/DnaJ_pept-bd"/>
</dbReference>
<dbReference type="InterPro" id="IPR001305">
    <property type="entry name" value="HSP_DnaJ_Cys-rich_dom"/>
</dbReference>
<dbReference type="InterPro" id="IPR036410">
    <property type="entry name" value="HSP_DnaJ_Cys-rich_dom_sf"/>
</dbReference>
<dbReference type="InterPro" id="IPR036869">
    <property type="entry name" value="J_dom_sf"/>
</dbReference>
<dbReference type="NCBIfam" id="TIGR02349">
    <property type="entry name" value="DnaJ_bact"/>
    <property type="match status" value="1"/>
</dbReference>
<dbReference type="NCBIfam" id="NF008035">
    <property type="entry name" value="PRK10767.1"/>
    <property type="match status" value="1"/>
</dbReference>
<dbReference type="NCBIfam" id="NF010869">
    <property type="entry name" value="PRK14276.1"/>
    <property type="match status" value="1"/>
</dbReference>
<dbReference type="NCBIfam" id="NF010873">
    <property type="entry name" value="PRK14280.1"/>
    <property type="match status" value="1"/>
</dbReference>
<dbReference type="PANTHER" id="PTHR43096:SF48">
    <property type="entry name" value="CHAPERONE PROTEIN DNAJ"/>
    <property type="match status" value="1"/>
</dbReference>
<dbReference type="PANTHER" id="PTHR43096">
    <property type="entry name" value="DNAJ HOMOLOG 1, MITOCHONDRIAL-RELATED"/>
    <property type="match status" value="1"/>
</dbReference>
<dbReference type="Pfam" id="PF00226">
    <property type="entry name" value="DnaJ"/>
    <property type="match status" value="1"/>
</dbReference>
<dbReference type="Pfam" id="PF01556">
    <property type="entry name" value="DnaJ_C"/>
    <property type="match status" value="1"/>
</dbReference>
<dbReference type="Pfam" id="PF00684">
    <property type="entry name" value="DnaJ_CXXCXGXG"/>
    <property type="match status" value="1"/>
</dbReference>
<dbReference type="PRINTS" id="PR00625">
    <property type="entry name" value="JDOMAIN"/>
</dbReference>
<dbReference type="SMART" id="SM00271">
    <property type="entry name" value="DnaJ"/>
    <property type="match status" value="1"/>
</dbReference>
<dbReference type="SUPFAM" id="SSF46565">
    <property type="entry name" value="Chaperone J-domain"/>
    <property type="match status" value="1"/>
</dbReference>
<dbReference type="SUPFAM" id="SSF57938">
    <property type="entry name" value="DnaJ/Hsp40 cysteine-rich domain"/>
    <property type="match status" value="1"/>
</dbReference>
<dbReference type="SUPFAM" id="SSF49493">
    <property type="entry name" value="HSP40/DnaJ peptide-binding domain"/>
    <property type="match status" value="2"/>
</dbReference>
<dbReference type="PROSITE" id="PS00636">
    <property type="entry name" value="DNAJ_1"/>
    <property type="match status" value="1"/>
</dbReference>
<dbReference type="PROSITE" id="PS50076">
    <property type="entry name" value="DNAJ_2"/>
    <property type="match status" value="1"/>
</dbReference>
<dbReference type="PROSITE" id="PS51188">
    <property type="entry name" value="ZF_CR"/>
    <property type="match status" value="1"/>
</dbReference>
<organism>
    <name type="scientific">Listeria monocytogenes serotype 4b (strain F2365)</name>
    <dbReference type="NCBI Taxonomy" id="265669"/>
    <lineage>
        <taxon>Bacteria</taxon>
        <taxon>Bacillati</taxon>
        <taxon>Bacillota</taxon>
        <taxon>Bacilli</taxon>
        <taxon>Bacillales</taxon>
        <taxon>Listeriaceae</taxon>
        <taxon>Listeria</taxon>
    </lineage>
</organism>
<sequence>MAKRDYYEVLGVSKSASADEIKKAYRKLSKQYHPDINKEAGADEKFKEISEAYEALSDPQKRAQYDQYGHVDPNQGFGGGAGGGFSGGGFSGFEDIFDTFFGGGGRQQDPNAPRQGSDLQYTMRLKFKEAIFGKDAEIEIPREENCDTCHGSGAKPGTTPEKCSHCGGKGSINVEQNTPFGRVVNKRTCQYCNGTGKEIKEKCPTCHGKGRVTKTKKIKVKVPAGVNDGQQMRVSGEGEAGINGGPNGDLYVVFVVIPDEFFEREADDIYVEVPITFVQATLGDEIDVPTVHGKVRLKIPSGTQTGTTFRLRGKGVPHLRGNGTGDQHVIVKVIVPKKLDDKQKEILREFASTTGDKVDEQTSGFFDKMKRAFKGD</sequence>
<comment type="function">
    <text evidence="1">Participates actively in the response to hyperosmotic and heat shock by preventing the aggregation of stress-denatured proteins and by disaggregating proteins, also in an autonomous, DnaK-independent fashion. Unfolded proteins bind initially to DnaJ; upon interaction with the DnaJ-bound protein, DnaK hydrolyzes its bound ATP, resulting in the formation of a stable complex. GrpE releases ADP from DnaK; ATP binding to DnaK triggers the release of the substrate protein, thus completing the reaction cycle. Several rounds of ATP-dependent interactions between DnaJ, DnaK and GrpE are required for fully efficient folding. Also involved, together with DnaK and GrpE, in the DNA replication of plasmids through activation of initiation proteins.</text>
</comment>
<comment type="cofactor">
    <cofactor evidence="1">
        <name>Zn(2+)</name>
        <dbReference type="ChEBI" id="CHEBI:29105"/>
    </cofactor>
    <text evidence="1">Binds 2 Zn(2+) ions per monomer.</text>
</comment>
<comment type="subunit">
    <text evidence="1">Homodimer.</text>
</comment>
<comment type="subcellular location">
    <subcellularLocation>
        <location evidence="1">Cytoplasm</location>
    </subcellularLocation>
</comment>
<comment type="domain">
    <text evidence="1">The J domain is necessary and sufficient to stimulate DnaK ATPase activity. Zinc center 1 plays an important role in the autonomous, DnaK-independent chaperone activity of DnaJ. Zinc center 2 is essential for interaction with DnaK and for DnaJ activity.</text>
</comment>
<comment type="similarity">
    <text evidence="1">Belongs to the DnaJ family.</text>
</comment>
<reference key="1">
    <citation type="journal article" date="2004" name="Nucleic Acids Res.">
        <title>Whole genome comparisons of serotype 4b and 1/2a strains of the food-borne pathogen Listeria monocytogenes reveal new insights into the core genome components of this species.</title>
        <authorList>
            <person name="Nelson K.E."/>
            <person name="Fouts D.E."/>
            <person name="Mongodin E.F."/>
            <person name="Ravel J."/>
            <person name="DeBoy R.T."/>
            <person name="Kolonay J.F."/>
            <person name="Rasko D.A."/>
            <person name="Angiuoli S.V."/>
            <person name="Gill S.R."/>
            <person name="Paulsen I.T."/>
            <person name="Peterson J.D."/>
            <person name="White O."/>
            <person name="Nelson W.C."/>
            <person name="Nierman W.C."/>
            <person name="Beanan M.J."/>
            <person name="Brinkac L.M."/>
            <person name="Daugherty S.C."/>
            <person name="Dodson R.J."/>
            <person name="Durkin A.S."/>
            <person name="Madupu R."/>
            <person name="Haft D.H."/>
            <person name="Selengut J."/>
            <person name="Van Aken S.E."/>
            <person name="Khouri H.M."/>
            <person name="Fedorova N."/>
            <person name="Forberger H.A."/>
            <person name="Tran B."/>
            <person name="Kathariou S."/>
            <person name="Wonderling L.D."/>
            <person name="Uhlich G.A."/>
            <person name="Bayles D.O."/>
            <person name="Luchansky J.B."/>
            <person name="Fraser C.M."/>
        </authorList>
    </citation>
    <scope>NUCLEOTIDE SEQUENCE [LARGE SCALE GENOMIC DNA]</scope>
    <source>
        <strain>F2365</strain>
    </source>
</reference>
<feature type="chain" id="PRO_0000070814" description="Chaperone protein DnaJ">
    <location>
        <begin position="1"/>
        <end position="376"/>
    </location>
</feature>
<feature type="domain" description="J" evidence="1">
    <location>
        <begin position="5"/>
        <end position="69"/>
    </location>
</feature>
<feature type="repeat" description="CXXCXGXG motif">
    <location>
        <begin position="146"/>
        <end position="153"/>
    </location>
</feature>
<feature type="repeat" description="CXXCXGXG motif">
    <location>
        <begin position="163"/>
        <end position="170"/>
    </location>
</feature>
<feature type="repeat" description="CXXCXGXG motif">
    <location>
        <begin position="189"/>
        <end position="196"/>
    </location>
</feature>
<feature type="repeat" description="CXXCXGXG motif">
    <location>
        <begin position="203"/>
        <end position="210"/>
    </location>
</feature>
<feature type="zinc finger region" description="CR-type" evidence="1">
    <location>
        <begin position="133"/>
        <end position="215"/>
    </location>
</feature>
<feature type="binding site" evidence="1">
    <location>
        <position position="146"/>
    </location>
    <ligand>
        <name>Zn(2+)</name>
        <dbReference type="ChEBI" id="CHEBI:29105"/>
        <label>1</label>
    </ligand>
</feature>
<feature type="binding site" evidence="1">
    <location>
        <position position="149"/>
    </location>
    <ligand>
        <name>Zn(2+)</name>
        <dbReference type="ChEBI" id="CHEBI:29105"/>
        <label>1</label>
    </ligand>
</feature>
<feature type="binding site" evidence="1">
    <location>
        <position position="163"/>
    </location>
    <ligand>
        <name>Zn(2+)</name>
        <dbReference type="ChEBI" id="CHEBI:29105"/>
        <label>2</label>
    </ligand>
</feature>
<feature type="binding site" evidence="1">
    <location>
        <position position="166"/>
    </location>
    <ligand>
        <name>Zn(2+)</name>
        <dbReference type="ChEBI" id="CHEBI:29105"/>
        <label>2</label>
    </ligand>
</feature>
<feature type="binding site" evidence="1">
    <location>
        <position position="189"/>
    </location>
    <ligand>
        <name>Zn(2+)</name>
        <dbReference type="ChEBI" id="CHEBI:29105"/>
        <label>2</label>
    </ligand>
</feature>
<feature type="binding site" evidence="1">
    <location>
        <position position="192"/>
    </location>
    <ligand>
        <name>Zn(2+)</name>
        <dbReference type="ChEBI" id="CHEBI:29105"/>
        <label>2</label>
    </ligand>
</feature>
<feature type="binding site" evidence="1">
    <location>
        <position position="203"/>
    </location>
    <ligand>
        <name>Zn(2+)</name>
        <dbReference type="ChEBI" id="CHEBI:29105"/>
        <label>1</label>
    </ligand>
</feature>
<feature type="binding site" evidence="1">
    <location>
        <position position="206"/>
    </location>
    <ligand>
        <name>Zn(2+)</name>
        <dbReference type="ChEBI" id="CHEBI:29105"/>
        <label>1</label>
    </ligand>
</feature>
<evidence type="ECO:0000255" key="1">
    <source>
        <dbReference type="HAMAP-Rule" id="MF_01152"/>
    </source>
</evidence>
<accession>Q71ZJ8</accession>